<dbReference type="EMBL" id="Z93393">
    <property type="protein sequence ID" value="CAB07696.1"/>
    <property type="molecule type" value="Genomic_DNA"/>
</dbReference>
<dbReference type="PIR" id="T27019">
    <property type="entry name" value="T27019"/>
</dbReference>
<dbReference type="RefSeq" id="NP_496856.1">
    <property type="nucleotide sequence ID" value="NM_064455.7"/>
</dbReference>
<dbReference type="SMR" id="O45952"/>
<dbReference type="BioGRID" id="40295">
    <property type="interactions" value="8"/>
</dbReference>
<dbReference type="ComplexPortal" id="CPX-3461">
    <property type="entry name" value="Chromosomal passenger complex"/>
</dbReference>
<dbReference type="DIP" id="DIP-26942N"/>
<dbReference type="FunCoup" id="O45952">
    <property type="interactions" value="1350"/>
</dbReference>
<dbReference type="IntAct" id="O45952">
    <property type="interactions" value="6"/>
</dbReference>
<dbReference type="STRING" id="6239.Y48E1B.12.1"/>
<dbReference type="iPTMnet" id="O45952"/>
<dbReference type="PaxDb" id="6239-Y48E1B.12"/>
<dbReference type="PeptideAtlas" id="O45952"/>
<dbReference type="EnsemblMetazoa" id="Y48E1B.12.1">
    <property type="protein sequence ID" value="Y48E1B.12.1"/>
    <property type="gene ID" value="WBGene00000804"/>
</dbReference>
<dbReference type="GeneID" id="175006"/>
<dbReference type="KEGG" id="cel:CELE_Y48E1B.12"/>
<dbReference type="UCSC" id="Y48E1B.12.1">
    <property type="organism name" value="c. elegans"/>
</dbReference>
<dbReference type="AGR" id="WB:WBGene00000804"/>
<dbReference type="CTD" id="175006"/>
<dbReference type="WormBase" id="Y48E1B.12">
    <property type="protein sequence ID" value="CE14874"/>
    <property type="gene ID" value="WBGene00000804"/>
    <property type="gene designation" value="csc-1"/>
</dbReference>
<dbReference type="eggNOG" id="ENOG502R84G">
    <property type="taxonomic scope" value="Eukaryota"/>
</dbReference>
<dbReference type="HOGENOM" id="CLU_116430_0_0_1"/>
<dbReference type="InParanoid" id="O45952"/>
<dbReference type="OMA" id="KEYHDMP"/>
<dbReference type="OrthoDB" id="5838837at2759"/>
<dbReference type="SignaLink" id="O45952"/>
<dbReference type="PRO" id="PR:O45952"/>
<dbReference type="Proteomes" id="UP000001940">
    <property type="component" value="Chromosome II"/>
</dbReference>
<dbReference type="Bgee" id="WBGene00000804">
    <property type="expression patterns" value="Expressed in embryo and 4 other cell types or tissues"/>
</dbReference>
<dbReference type="GO" id="GO:0032133">
    <property type="term" value="C:chromosome passenger complex"/>
    <property type="evidence" value="ECO:0000353"/>
    <property type="project" value="ComplexPortal"/>
</dbReference>
<dbReference type="GO" id="GO:0000775">
    <property type="term" value="C:chromosome, centromeric region"/>
    <property type="evidence" value="ECO:0007669"/>
    <property type="project" value="UniProtKB-SubCell"/>
</dbReference>
<dbReference type="GO" id="GO:0000793">
    <property type="term" value="C:condensed chromosome"/>
    <property type="evidence" value="ECO:0000314"/>
    <property type="project" value="WormBase"/>
</dbReference>
<dbReference type="GO" id="GO:0000794">
    <property type="term" value="C:condensed nuclear chromosome"/>
    <property type="evidence" value="ECO:0000314"/>
    <property type="project" value="WormBase"/>
</dbReference>
<dbReference type="GO" id="GO:0005737">
    <property type="term" value="C:cytoplasm"/>
    <property type="evidence" value="ECO:0007669"/>
    <property type="project" value="UniProtKB-KW"/>
</dbReference>
<dbReference type="GO" id="GO:1990385">
    <property type="term" value="C:meiotic spindle midzone"/>
    <property type="evidence" value="ECO:0000314"/>
    <property type="project" value="WormBase"/>
</dbReference>
<dbReference type="GO" id="GO:0015630">
    <property type="term" value="C:microtubule cytoskeleton"/>
    <property type="evidence" value="ECO:0000314"/>
    <property type="project" value="ComplexPortal"/>
</dbReference>
<dbReference type="GO" id="GO:1990023">
    <property type="term" value="C:mitotic spindle midzone"/>
    <property type="evidence" value="ECO:0000314"/>
    <property type="project" value="WormBase"/>
</dbReference>
<dbReference type="GO" id="GO:0045132">
    <property type="term" value="P:meiotic chromosome segregation"/>
    <property type="evidence" value="ECO:0000315"/>
    <property type="project" value="WormBase"/>
</dbReference>
<dbReference type="GO" id="GO:0000278">
    <property type="term" value="P:mitotic cell cycle"/>
    <property type="evidence" value="ECO:0000303"/>
    <property type="project" value="ComplexPortal"/>
</dbReference>
<dbReference type="GO" id="GO:0007079">
    <property type="term" value="P:mitotic chromosome movement towards spindle pole"/>
    <property type="evidence" value="ECO:0000315"/>
    <property type="project" value="WormBase"/>
</dbReference>
<dbReference type="GO" id="GO:1990386">
    <property type="term" value="P:mitotic cleavage furrow ingression"/>
    <property type="evidence" value="ECO:0000315"/>
    <property type="project" value="WormBase"/>
</dbReference>
<dbReference type="GO" id="GO:0000281">
    <property type="term" value="P:mitotic cytokinesis"/>
    <property type="evidence" value="ECO:0000315"/>
    <property type="project" value="WormBase"/>
</dbReference>
<dbReference type="GO" id="GO:0007080">
    <property type="term" value="P:mitotic metaphase chromosome alignment"/>
    <property type="evidence" value="ECO:0000315"/>
    <property type="project" value="WormBase"/>
</dbReference>
<dbReference type="GO" id="GO:0051256">
    <property type="term" value="P:mitotic spindle midzone assembly"/>
    <property type="evidence" value="ECO:0000303"/>
    <property type="project" value="ComplexPortal"/>
</dbReference>
<dbReference type="GO" id="GO:0040038">
    <property type="term" value="P:polar body extrusion after meiotic divisions"/>
    <property type="evidence" value="ECO:0000315"/>
    <property type="project" value="WormBase"/>
</dbReference>
<dbReference type="GO" id="GO:0090267">
    <property type="term" value="P:positive regulation of mitotic cell cycle spindle assembly checkpoint"/>
    <property type="evidence" value="ECO:0000303"/>
    <property type="project" value="ComplexPortal"/>
</dbReference>
<dbReference type="GO" id="GO:1901970">
    <property type="term" value="P:positive regulation of mitotic sister chromatid separation"/>
    <property type="evidence" value="ECO:0000303"/>
    <property type="project" value="ComplexPortal"/>
</dbReference>
<comment type="function">
    <text evidence="3">Component of the chromosomal passenger complex (CPC), a complex that acts as a key regulator of chromosome segregation and cytokinesis during mitosis. The CPC complex has essential functions at the centromere in ensuring correct chromosome alignment and segregation. In the complex, it may be required to direct the Aurora B/air-2 to centromeric DNA.</text>
</comment>
<comment type="subunit">
    <text evidence="3">Component of the CPC complex which consists of icp-1; csc-1; bir-1 and air-2. Within the complex interacts with Aurora B/air-2, bir-1 and icp-1.</text>
</comment>
<comment type="interaction">
    <interactant intactId="EBI-328477">
        <id>O45952</id>
    </interactant>
    <interactant intactId="EBI-317844">
        <id>Q9BIC1</id>
        <label>afd-1</label>
    </interactant>
    <organismsDiffer>false</organismsDiffer>
    <experiments>2</experiments>
</comment>
<comment type="interaction">
    <interactant intactId="EBI-328477">
        <id>O45952</id>
    </interactant>
    <interactant intactId="EBI-313389">
        <id>O17583</id>
        <label>lin-10</label>
    </interactant>
    <organismsDiffer>false</organismsDiffer>
    <experiments>2</experiments>
</comment>
<comment type="interaction">
    <interactant intactId="EBI-328477">
        <id>O45952</id>
    </interactant>
    <interactant intactId="EBI-2917046">
        <id>C1P635</id>
        <label>magi-1</label>
    </interactant>
    <organismsDiffer>false</organismsDiffer>
    <experiments>2</experiments>
</comment>
<comment type="interaction">
    <interactant intactId="EBI-328477">
        <id>O45952</id>
    </interactant>
    <interactant intactId="EBI-2918984">
        <id>P90976</id>
    </interactant>
    <organismsDiffer>false</organismsDiffer>
    <experiments>2</experiments>
</comment>
<comment type="subcellular location">
    <subcellularLocation>
        <location evidence="3">Nucleus</location>
    </subcellularLocation>
    <subcellularLocation>
        <location evidence="3">Chromosome</location>
        <location evidence="3">Centromere</location>
    </subcellularLocation>
    <subcellularLocation>
        <location evidence="3">Cytoplasm</location>
        <location evidence="3">Cytoskeleton</location>
        <location evidence="3">Spindle</location>
    </subcellularLocation>
    <text>Localizes on chromosome arms and inner centromeres from prophase through metaphase and then transferring to the central spindle from anaphase through cytokinesis.</text>
</comment>
<comment type="similarity">
    <text evidence="4">Belongs to the borealin family. Highly divergent.</text>
</comment>
<evidence type="ECO:0000255" key="1"/>
<evidence type="ECO:0000256" key="2">
    <source>
        <dbReference type="SAM" id="MobiDB-lite"/>
    </source>
</evidence>
<evidence type="ECO:0000269" key="3">
    <source>
    </source>
</evidence>
<evidence type="ECO:0000305" key="4"/>
<organism>
    <name type="scientific">Caenorhabditis elegans</name>
    <dbReference type="NCBI Taxonomy" id="6239"/>
    <lineage>
        <taxon>Eukaryota</taxon>
        <taxon>Metazoa</taxon>
        <taxon>Ecdysozoa</taxon>
        <taxon>Nematoda</taxon>
        <taxon>Chromadorea</taxon>
        <taxon>Rhabditida</taxon>
        <taxon>Rhabditina</taxon>
        <taxon>Rhabditomorpha</taxon>
        <taxon>Rhabditoidea</taxon>
        <taxon>Rhabditidae</taxon>
        <taxon>Peloderinae</taxon>
        <taxon>Caenorhabditis</taxon>
    </lineage>
</organism>
<proteinExistence type="evidence at protein level"/>
<accession>O45952</accession>
<feature type="chain" id="PRO_0000247084" description="Chromosome segregation and cytokinesis defective protein 1">
    <location>
        <begin position="1"/>
        <end position="249"/>
    </location>
</feature>
<feature type="region of interest" description="Disordered" evidence="2">
    <location>
        <begin position="70"/>
        <end position="89"/>
    </location>
</feature>
<feature type="region of interest" description="Disordered" evidence="2">
    <location>
        <begin position="94"/>
        <end position="183"/>
    </location>
</feature>
<feature type="region of interest" description="Disordered" evidence="2">
    <location>
        <begin position="208"/>
        <end position="249"/>
    </location>
</feature>
<feature type="coiled-coil region" evidence="1">
    <location>
        <begin position="12"/>
        <end position="48"/>
    </location>
</feature>
<feature type="compositionally biased region" description="Acidic residues" evidence="2">
    <location>
        <begin position="73"/>
        <end position="85"/>
    </location>
</feature>
<feature type="compositionally biased region" description="Polar residues" evidence="2">
    <location>
        <begin position="109"/>
        <end position="126"/>
    </location>
</feature>
<feature type="compositionally biased region" description="Low complexity" evidence="2">
    <location>
        <begin position="224"/>
        <end position="236"/>
    </location>
</feature>
<sequence length="249" mass="26782">MPPRKIKKDPAVVAMADTLETRVKDLLEEYKKKLREVALQTAKAESDRIIATIKPKYRDMPIMEFLASPPDDFYIESGEEEEEGEAAVAVKQELPSEPDMEIDDAAAAQKTSIPIGQNSGRNTVQVKQEPEIDDDAAHETSIPIAPSGQNSGRNTAADEHRRNEIITPAGQVLPLPTLQPEKPFRAPHVDEEIAFSVNGSPLVLAGRTTATAAGKENRKKSKKSGAASKKAAAAAGPLQPETENAGTSV</sequence>
<reference key="1">
    <citation type="journal article" date="1998" name="Science">
        <title>Genome sequence of the nematode C. elegans: a platform for investigating biology.</title>
        <authorList>
            <consortium name="The C. elegans sequencing consortium"/>
        </authorList>
    </citation>
    <scope>NUCLEOTIDE SEQUENCE [LARGE SCALE GENOMIC DNA]</scope>
    <source>
        <strain>Bristol N2</strain>
    </source>
</reference>
<reference key="2">
    <citation type="journal article" date="2003" name="J. Cell Biol.">
        <title>CSC-1: a subunit of the Aurora B kinase complex that binds to the survivin-like protein BIR-1 and the incenp-like protein ICP-1.</title>
        <authorList>
            <person name="Romano A."/>
            <person name="Guse A."/>
            <person name="Krascenicova I."/>
            <person name="Schnabel H."/>
            <person name="Schnabel R."/>
            <person name="Glotzer M."/>
        </authorList>
    </citation>
    <scope>FUNCTION</scope>
    <scope>IDENTIFICATION IN THE CHROMOSOMAL PASSENGER COMPLEX</scope>
    <scope>INTERACTION WITH AIR-2; BIR-1 AND ICP-1</scope>
    <scope>SUBCELLULAR LOCATION</scope>
</reference>
<protein>
    <recommendedName>
        <fullName>Chromosome segregation and cytokinesis defective protein 1</fullName>
    </recommendedName>
</protein>
<name>CSC1_CAEEL</name>
<keyword id="KW-0131">Cell cycle</keyword>
<keyword id="KW-0132">Cell division</keyword>
<keyword id="KW-0137">Centromere</keyword>
<keyword id="KW-0158">Chromosome</keyword>
<keyword id="KW-0175">Coiled coil</keyword>
<keyword id="KW-0963">Cytoplasm</keyword>
<keyword id="KW-0206">Cytoskeleton</keyword>
<keyword id="KW-0498">Mitosis</keyword>
<keyword id="KW-0539">Nucleus</keyword>
<keyword id="KW-1185">Reference proteome</keyword>
<gene>
    <name type="primary">csc-1</name>
    <name type="ORF">Y48E1B.12</name>
</gene>